<proteinExistence type="inferred from homology"/>
<comment type="function">
    <text evidence="1">Catalyzes the hydrolysis of 1,4-dihydroxy-2-naphthoyl-CoA (DHNA-CoA) to 1,4-dihydroxy-2-naphthoate (DHNA), a reaction involved in phylloquinone (vitamin K1) biosynthesis.</text>
</comment>
<comment type="catalytic activity">
    <reaction evidence="1">
        <text>1,4-dihydroxy-2-naphthoyl-CoA + H2O = 1,4-dihydroxy-2-naphthoate + CoA + H(+)</text>
        <dbReference type="Rhea" id="RHEA:26309"/>
        <dbReference type="ChEBI" id="CHEBI:11173"/>
        <dbReference type="ChEBI" id="CHEBI:15377"/>
        <dbReference type="ChEBI" id="CHEBI:15378"/>
        <dbReference type="ChEBI" id="CHEBI:57287"/>
        <dbReference type="ChEBI" id="CHEBI:58897"/>
        <dbReference type="EC" id="3.1.2.28"/>
    </reaction>
</comment>
<comment type="pathway">
    <text evidence="1">Cofactor biosynthesis; phylloquinone biosynthesis.</text>
</comment>
<comment type="pathway">
    <text evidence="1">Quinol/quinone metabolism; 1,4-dihydroxy-2-naphthoate biosynthesis; 1,4-dihydroxy-2-naphthoate from chorismate: step 7/7.</text>
</comment>
<comment type="similarity">
    <text evidence="1">Belongs to the 4-hydroxybenzoyl-CoA thioesterase family. DHNA-CoA hydrolase subfamily.</text>
</comment>
<organism>
    <name type="scientific">Prochlorococcus marinus (strain MIT 9515)</name>
    <dbReference type="NCBI Taxonomy" id="167542"/>
    <lineage>
        <taxon>Bacteria</taxon>
        <taxon>Bacillati</taxon>
        <taxon>Cyanobacteriota</taxon>
        <taxon>Cyanophyceae</taxon>
        <taxon>Synechococcales</taxon>
        <taxon>Prochlorococcaceae</taxon>
        <taxon>Prochlorococcus</taxon>
    </lineage>
</organism>
<dbReference type="EC" id="3.1.2.28" evidence="1"/>
<dbReference type="EMBL" id="CP000552">
    <property type="protein sequence ID" value="ABM71411.1"/>
    <property type="molecule type" value="Genomic_DNA"/>
</dbReference>
<dbReference type="RefSeq" id="WP_011819525.1">
    <property type="nucleotide sequence ID" value="NC_008817.1"/>
</dbReference>
<dbReference type="SMR" id="A2BUF0"/>
<dbReference type="STRING" id="167542.P9515_02021"/>
<dbReference type="GeneID" id="60202111"/>
<dbReference type="KEGG" id="pmc:P9515_02021"/>
<dbReference type="eggNOG" id="COG0824">
    <property type="taxonomic scope" value="Bacteria"/>
</dbReference>
<dbReference type="HOGENOM" id="CLU_101141_5_3_3"/>
<dbReference type="OrthoDB" id="9800856at2"/>
<dbReference type="UniPathway" id="UPA00995"/>
<dbReference type="UniPathway" id="UPA01057">
    <property type="reaction ID" value="UER01033"/>
</dbReference>
<dbReference type="Proteomes" id="UP000001589">
    <property type="component" value="Chromosome"/>
</dbReference>
<dbReference type="GO" id="GO:0061522">
    <property type="term" value="F:1,4-dihydroxy-2-naphthoyl-CoA thioesterase activity"/>
    <property type="evidence" value="ECO:0007669"/>
    <property type="project" value="UniProtKB-EC"/>
</dbReference>
<dbReference type="GO" id="GO:0042372">
    <property type="term" value="P:phylloquinone biosynthetic process"/>
    <property type="evidence" value="ECO:0007669"/>
    <property type="project" value="UniProtKB-UniRule"/>
</dbReference>
<dbReference type="CDD" id="cd00586">
    <property type="entry name" value="4HBT"/>
    <property type="match status" value="1"/>
</dbReference>
<dbReference type="Gene3D" id="3.10.129.10">
    <property type="entry name" value="Hotdog Thioesterase"/>
    <property type="match status" value="1"/>
</dbReference>
<dbReference type="HAMAP" id="MF_02101">
    <property type="entry name" value="DHNA_CoA_hydrolase"/>
    <property type="match status" value="1"/>
</dbReference>
<dbReference type="InterPro" id="IPR022829">
    <property type="entry name" value="DHNA_CoA_hydrolase"/>
</dbReference>
<dbReference type="InterPro" id="IPR029069">
    <property type="entry name" value="HotDog_dom_sf"/>
</dbReference>
<dbReference type="Pfam" id="PF13279">
    <property type="entry name" value="4HBT_2"/>
    <property type="match status" value="1"/>
</dbReference>
<dbReference type="SUPFAM" id="SSF54637">
    <property type="entry name" value="Thioesterase/thiol ester dehydrase-isomerase"/>
    <property type="match status" value="1"/>
</dbReference>
<name>DNCH_PROM5</name>
<gene>
    <name type="ordered locus">P9515_02021</name>
</gene>
<feature type="chain" id="PRO_0000377023" description="1,4-dihydroxy-2-naphthoyl-CoA hydrolase">
    <location>
        <begin position="1"/>
        <end position="150"/>
    </location>
</feature>
<feature type="active site" evidence="1">
    <location>
        <position position="19"/>
    </location>
</feature>
<reference key="1">
    <citation type="journal article" date="2007" name="PLoS Genet.">
        <title>Patterns and implications of gene gain and loss in the evolution of Prochlorococcus.</title>
        <authorList>
            <person name="Kettler G.C."/>
            <person name="Martiny A.C."/>
            <person name="Huang K."/>
            <person name="Zucker J."/>
            <person name="Coleman M.L."/>
            <person name="Rodrigue S."/>
            <person name="Chen F."/>
            <person name="Lapidus A."/>
            <person name="Ferriera S."/>
            <person name="Johnson J."/>
            <person name="Steglich C."/>
            <person name="Church G.M."/>
            <person name="Richardson P."/>
            <person name="Chisholm S.W."/>
        </authorList>
    </citation>
    <scope>NUCLEOTIDE SEQUENCE [LARGE SCALE GENOMIC DNA]</scope>
    <source>
        <strain>MIT 9515</strain>
    </source>
</reference>
<protein>
    <recommendedName>
        <fullName evidence="1">1,4-dihydroxy-2-naphthoyl-CoA hydrolase</fullName>
        <shortName evidence="1">DHNA-CoA hydrolase</shortName>
        <ecNumber evidence="1">3.1.2.28</ecNumber>
    </recommendedName>
    <alternativeName>
        <fullName evidence="1">DHNA-CoA thioesterase</fullName>
    </alternativeName>
</protein>
<keyword id="KW-0378">Hydrolase</keyword>
<sequence length="150" mass="17386">MNPHSWLILKRKVRFGDCDSAGVIHFHNLLRWAHESWEESIDIYGISHQVIFPSCHSHENQNILPIVNCEANFLLPIKLGDLLTVKIFPKKISNHLFQVNTLFLKDEIKVAEGKIIHCSLDMNSKLKVKLPDQLERWIEASNINTHLKEC</sequence>
<accession>A2BUF0</accession>
<evidence type="ECO:0000255" key="1">
    <source>
        <dbReference type="HAMAP-Rule" id="MF_02101"/>
    </source>
</evidence>